<comment type="function">
    <text evidence="1">The enzymes which catalyze the reversible phosphorolysis of pyrimidine nucleosides are involved in the degradation of these compounds and in their utilization as carbon and energy sources, or in the rescue of pyrimidine bases for nucleotide synthesis.</text>
</comment>
<comment type="catalytic activity">
    <reaction evidence="1">
        <text>thymidine + phosphate = 2-deoxy-alpha-D-ribose 1-phosphate + thymine</text>
        <dbReference type="Rhea" id="RHEA:16037"/>
        <dbReference type="ChEBI" id="CHEBI:17748"/>
        <dbReference type="ChEBI" id="CHEBI:17821"/>
        <dbReference type="ChEBI" id="CHEBI:43474"/>
        <dbReference type="ChEBI" id="CHEBI:57259"/>
        <dbReference type="EC" id="2.4.2.4"/>
    </reaction>
</comment>
<comment type="pathway">
    <text evidence="1">Pyrimidine metabolism; dTMP biosynthesis via salvage pathway; dTMP from thymine: step 1/2.</text>
</comment>
<comment type="subunit">
    <text evidence="1">Homodimer.</text>
</comment>
<comment type="similarity">
    <text evidence="1">Belongs to the thymidine/pyrimidine-nucleoside phosphorylase family.</text>
</comment>
<gene>
    <name evidence="1" type="primary">deoA</name>
    <name type="ordered locus">SeD_A4983</name>
</gene>
<organism>
    <name type="scientific">Salmonella dublin (strain CT_02021853)</name>
    <dbReference type="NCBI Taxonomy" id="439851"/>
    <lineage>
        <taxon>Bacteria</taxon>
        <taxon>Pseudomonadati</taxon>
        <taxon>Pseudomonadota</taxon>
        <taxon>Gammaproteobacteria</taxon>
        <taxon>Enterobacterales</taxon>
        <taxon>Enterobacteriaceae</taxon>
        <taxon>Salmonella</taxon>
    </lineage>
</organism>
<dbReference type="EC" id="2.4.2.4" evidence="1"/>
<dbReference type="EMBL" id="CP001144">
    <property type="protein sequence ID" value="ACH74787.1"/>
    <property type="molecule type" value="Genomic_DNA"/>
</dbReference>
<dbReference type="RefSeq" id="WP_000477838.1">
    <property type="nucleotide sequence ID" value="NC_011205.1"/>
</dbReference>
<dbReference type="SMR" id="B5FTC6"/>
<dbReference type="KEGG" id="sed:SeD_A4983"/>
<dbReference type="HOGENOM" id="CLU_025040_0_1_6"/>
<dbReference type="UniPathway" id="UPA00578">
    <property type="reaction ID" value="UER00638"/>
</dbReference>
<dbReference type="Proteomes" id="UP000008322">
    <property type="component" value="Chromosome"/>
</dbReference>
<dbReference type="GO" id="GO:0005829">
    <property type="term" value="C:cytosol"/>
    <property type="evidence" value="ECO:0007669"/>
    <property type="project" value="TreeGrafter"/>
</dbReference>
<dbReference type="GO" id="GO:0004645">
    <property type="term" value="F:1,4-alpha-oligoglucan phosphorylase activity"/>
    <property type="evidence" value="ECO:0007669"/>
    <property type="project" value="InterPro"/>
</dbReference>
<dbReference type="GO" id="GO:0009032">
    <property type="term" value="F:thymidine phosphorylase activity"/>
    <property type="evidence" value="ECO:0007669"/>
    <property type="project" value="UniProtKB-UniRule"/>
</dbReference>
<dbReference type="GO" id="GO:0006206">
    <property type="term" value="P:pyrimidine nucleobase metabolic process"/>
    <property type="evidence" value="ECO:0007669"/>
    <property type="project" value="InterPro"/>
</dbReference>
<dbReference type="GO" id="GO:0046104">
    <property type="term" value="P:thymidine metabolic process"/>
    <property type="evidence" value="ECO:0007669"/>
    <property type="project" value="UniProtKB-UniRule"/>
</dbReference>
<dbReference type="FunFam" id="3.40.1030.10:FF:000001">
    <property type="entry name" value="Thymidine phosphorylase"/>
    <property type="match status" value="1"/>
</dbReference>
<dbReference type="FunFam" id="3.90.1170.30:FF:000001">
    <property type="entry name" value="Thymidine phosphorylase"/>
    <property type="match status" value="1"/>
</dbReference>
<dbReference type="Gene3D" id="3.40.1030.10">
    <property type="entry name" value="Nucleoside phosphorylase/phosphoribosyltransferase catalytic domain"/>
    <property type="match status" value="1"/>
</dbReference>
<dbReference type="Gene3D" id="3.90.1170.30">
    <property type="entry name" value="Pyrimidine nucleoside phosphorylase-like, C-terminal domain"/>
    <property type="match status" value="1"/>
</dbReference>
<dbReference type="Gene3D" id="1.20.970.10">
    <property type="entry name" value="Transferase, Pyrimidine Nucleoside Phosphorylase, Chain C"/>
    <property type="match status" value="1"/>
</dbReference>
<dbReference type="HAMAP" id="MF_01628">
    <property type="entry name" value="Thymid_phosp"/>
    <property type="match status" value="1"/>
</dbReference>
<dbReference type="InterPro" id="IPR000312">
    <property type="entry name" value="Glycosyl_Trfase_fam3"/>
</dbReference>
<dbReference type="InterPro" id="IPR017459">
    <property type="entry name" value="Glycosyl_Trfase_fam3_N_dom"/>
</dbReference>
<dbReference type="InterPro" id="IPR036320">
    <property type="entry name" value="Glycosyl_Trfase_fam3_N_dom_sf"/>
</dbReference>
<dbReference type="InterPro" id="IPR035902">
    <property type="entry name" value="Nuc_phospho_transferase"/>
</dbReference>
<dbReference type="InterPro" id="IPR036566">
    <property type="entry name" value="PYNP-like_C_sf"/>
</dbReference>
<dbReference type="InterPro" id="IPR013102">
    <property type="entry name" value="PYNP_C"/>
</dbReference>
<dbReference type="InterPro" id="IPR018090">
    <property type="entry name" value="Pyrmidine_PPas_bac/euk"/>
</dbReference>
<dbReference type="InterPro" id="IPR017872">
    <property type="entry name" value="Pyrmidine_PPase_CS"/>
</dbReference>
<dbReference type="InterPro" id="IPR000053">
    <property type="entry name" value="Thymidine/pyrmidine_PPase"/>
</dbReference>
<dbReference type="InterPro" id="IPR013465">
    <property type="entry name" value="Thymidine_Pase"/>
</dbReference>
<dbReference type="NCBIfam" id="NF004490">
    <property type="entry name" value="PRK05820.1"/>
    <property type="match status" value="1"/>
</dbReference>
<dbReference type="NCBIfam" id="TIGR02643">
    <property type="entry name" value="T_phosphoryl"/>
    <property type="match status" value="1"/>
</dbReference>
<dbReference type="NCBIfam" id="TIGR02644">
    <property type="entry name" value="Y_phosphoryl"/>
    <property type="match status" value="1"/>
</dbReference>
<dbReference type="PANTHER" id="PTHR10515">
    <property type="entry name" value="THYMIDINE PHOSPHORYLASE"/>
    <property type="match status" value="1"/>
</dbReference>
<dbReference type="PANTHER" id="PTHR10515:SF0">
    <property type="entry name" value="THYMIDINE PHOSPHORYLASE"/>
    <property type="match status" value="1"/>
</dbReference>
<dbReference type="Pfam" id="PF02885">
    <property type="entry name" value="Glycos_trans_3N"/>
    <property type="match status" value="1"/>
</dbReference>
<dbReference type="Pfam" id="PF00591">
    <property type="entry name" value="Glycos_transf_3"/>
    <property type="match status" value="1"/>
</dbReference>
<dbReference type="Pfam" id="PF07831">
    <property type="entry name" value="PYNP_C"/>
    <property type="match status" value="1"/>
</dbReference>
<dbReference type="PIRSF" id="PIRSF000478">
    <property type="entry name" value="TP_PyNP"/>
    <property type="match status" value="1"/>
</dbReference>
<dbReference type="SMART" id="SM00941">
    <property type="entry name" value="PYNP_C"/>
    <property type="match status" value="1"/>
</dbReference>
<dbReference type="SUPFAM" id="SSF52418">
    <property type="entry name" value="Nucleoside phosphorylase/phosphoribosyltransferase catalytic domain"/>
    <property type="match status" value="1"/>
</dbReference>
<dbReference type="SUPFAM" id="SSF47648">
    <property type="entry name" value="Nucleoside phosphorylase/phosphoribosyltransferase N-terminal domain"/>
    <property type="match status" value="1"/>
</dbReference>
<dbReference type="SUPFAM" id="SSF54680">
    <property type="entry name" value="Pyrimidine nucleoside phosphorylase C-terminal domain"/>
    <property type="match status" value="1"/>
</dbReference>
<dbReference type="PROSITE" id="PS00647">
    <property type="entry name" value="THYMID_PHOSPHORYLASE"/>
    <property type="match status" value="1"/>
</dbReference>
<protein>
    <recommendedName>
        <fullName evidence="1">Thymidine phosphorylase</fullName>
        <ecNumber evidence="1">2.4.2.4</ecNumber>
    </recommendedName>
    <alternativeName>
        <fullName evidence="1">TdRPase</fullName>
    </alternativeName>
</protein>
<feature type="chain" id="PRO_1000186266" description="Thymidine phosphorylase">
    <location>
        <begin position="1"/>
        <end position="440"/>
    </location>
</feature>
<keyword id="KW-0328">Glycosyltransferase</keyword>
<keyword id="KW-0808">Transferase</keyword>
<reference key="1">
    <citation type="journal article" date="2011" name="J. Bacteriol.">
        <title>Comparative genomics of 28 Salmonella enterica isolates: evidence for CRISPR-mediated adaptive sublineage evolution.</title>
        <authorList>
            <person name="Fricke W.F."/>
            <person name="Mammel M.K."/>
            <person name="McDermott P.F."/>
            <person name="Tartera C."/>
            <person name="White D.G."/>
            <person name="Leclerc J.E."/>
            <person name="Ravel J."/>
            <person name="Cebula T.A."/>
        </authorList>
    </citation>
    <scope>NUCLEOTIDE SEQUENCE [LARGE SCALE GENOMIC DNA]</scope>
    <source>
        <strain>CT_02021853</strain>
    </source>
</reference>
<accession>B5FTC6</accession>
<sequence length="440" mass="47002">MFLAQEIIRKKRDGHALSDEEIRFFINGIRDNTISEGQIAALAMTIFFHDMTMPERVSLTMAMRDSGTVLDWKSLNLNGPIVDKHSTGGVGDVTSLMLGPMVAACGGYVPMISGRGLGHTGGTLDKLEAIPGFDIFPDDNRFREIIQDVGVAIIGQTSSLAPADKRFYATRDITATVDSIPLITGSILAKKLAEGLDALVMDVKVGSGAFMPTYELSEALAEAIVGVANGAGVRTTALLTDMNQVLASSAGNAVEVREAVQFLTGEYRNPRLFDVTMALCVEMLISGQLAKDDAEARAKLQAVLDNGKAAEVFGRMVAAQKGPSDFVENYDKYLPTAMLSKAVYADTEGFISAMDTRALGMAVVSMGGGRRQASDTIDYSVGFTDMARLGDSIDGQRPLAVIHAKDEASWQEAAKAVKAAIILDDKAPASTPSVYRRITE</sequence>
<evidence type="ECO:0000255" key="1">
    <source>
        <dbReference type="HAMAP-Rule" id="MF_01628"/>
    </source>
</evidence>
<proteinExistence type="inferred from homology"/>
<name>TYPH_SALDC</name>